<comment type="function">
    <text evidence="1">The RuvA-RuvB-RuvC complex processes Holliday junction (HJ) DNA during genetic recombination and DNA repair, while the RuvA-RuvB complex plays an important role in the rescue of blocked DNA replication forks via replication fork reversal (RFR). RuvA specifically binds to HJ cruciform DNA, conferring on it an open structure. The RuvB hexamer acts as an ATP-dependent pump, pulling dsDNA into and through the RuvAB complex. RuvB forms 2 homohexamers on either side of HJ DNA bound by 1 or 2 RuvA tetramers; 4 subunits per hexamer contact DNA at a time. Coordinated motions by a converter formed by DNA-disengaged RuvB subunits stimulates ATP hydrolysis and nucleotide exchange. Immobilization of the converter enables RuvB to convert the ATP-contained energy into a lever motion, pulling 2 nucleotides of DNA out of the RuvA tetramer per ATP hydrolyzed, thus driving DNA branch migration. The RuvB motors rotate together with the DNA substrate, which together with the progressing nucleotide cycle form the mechanistic basis for DNA recombination by continuous HJ branch migration. Branch migration allows RuvC to scan DNA until it finds its consensus sequence, where it cleaves and resolves cruciform DNA.</text>
</comment>
<comment type="catalytic activity">
    <reaction evidence="1">
        <text>ATP + H2O = ADP + phosphate + H(+)</text>
        <dbReference type="Rhea" id="RHEA:13065"/>
        <dbReference type="ChEBI" id="CHEBI:15377"/>
        <dbReference type="ChEBI" id="CHEBI:15378"/>
        <dbReference type="ChEBI" id="CHEBI:30616"/>
        <dbReference type="ChEBI" id="CHEBI:43474"/>
        <dbReference type="ChEBI" id="CHEBI:456216"/>
    </reaction>
</comment>
<comment type="subunit">
    <text evidence="1">Homohexamer. Forms an RuvA(8)-RuvB(12)-Holliday junction (HJ) complex. HJ DNA is sandwiched between 2 RuvA tetramers; dsDNA enters through RuvA and exits via RuvB. An RuvB hexamer assembles on each DNA strand where it exits the tetramer. Each RuvB hexamer is contacted by two RuvA subunits (via domain III) on 2 adjacent RuvB subunits; this complex drives branch migration. In the full resolvosome a probable DNA-RuvA(4)-RuvB(12)-RuvC(2) complex forms which resolves the HJ.</text>
</comment>
<comment type="subcellular location">
    <subcellularLocation>
        <location evidence="1">Cytoplasm</location>
    </subcellularLocation>
</comment>
<comment type="domain">
    <text evidence="1">Has 3 domains, the large (RuvB-L) and small ATPase (RuvB-S) domains and the C-terminal head (RuvB-H) domain. The head domain binds DNA, while the ATPase domains jointly bind ATP, ADP or are empty depending on the state of the subunit in the translocation cycle. During a single DNA translocation step the structure of each domain remains the same, but their relative positions change.</text>
</comment>
<comment type="similarity">
    <text evidence="1">Belongs to the RuvB family.</text>
</comment>
<keyword id="KW-0067">ATP-binding</keyword>
<keyword id="KW-0963">Cytoplasm</keyword>
<keyword id="KW-0227">DNA damage</keyword>
<keyword id="KW-0233">DNA recombination</keyword>
<keyword id="KW-0234">DNA repair</keyword>
<keyword id="KW-0238">DNA-binding</keyword>
<keyword id="KW-0378">Hydrolase</keyword>
<keyword id="KW-0547">Nucleotide-binding</keyword>
<evidence type="ECO:0000255" key="1">
    <source>
        <dbReference type="HAMAP-Rule" id="MF_00016"/>
    </source>
</evidence>
<gene>
    <name evidence="1" type="primary">ruvB</name>
    <name type="ordered locus">amb3216</name>
</gene>
<feature type="chain" id="PRO_0000235377" description="Holliday junction branch migration complex subunit RuvB">
    <location>
        <begin position="1"/>
        <end position="347"/>
    </location>
</feature>
<feature type="region of interest" description="Large ATPase domain (RuvB-L)" evidence="1">
    <location>
        <begin position="1"/>
        <end position="180"/>
    </location>
</feature>
<feature type="region of interest" description="Small ATPAse domain (RuvB-S)" evidence="1">
    <location>
        <begin position="181"/>
        <end position="251"/>
    </location>
</feature>
<feature type="region of interest" description="Head domain (RuvB-H)" evidence="1">
    <location>
        <begin position="254"/>
        <end position="347"/>
    </location>
</feature>
<feature type="binding site" evidence="1">
    <location>
        <position position="19"/>
    </location>
    <ligand>
        <name>ATP</name>
        <dbReference type="ChEBI" id="CHEBI:30616"/>
    </ligand>
</feature>
<feature type="binding site" evidence="1">
    <location>
        <position position="20"/>
    </location>
    <ligand>
        <name>ATP</name>
        <dbReference type="ChEBI" id="CHEBI:30616"/>
    </ligand>
</feature>
<feature type="binding site" evidence="1">
    <location>
        <position position="61"/>
    </location>
    <ligand>
        <name>ATP</name>
        <dbReference type="ChEBI" id="CHEBI:30616"/>
    </ligand>
</feature>
<feature type="binding site" evidence="1">
    <location>
        <position position="64"/>
    </location>
    <ligand>
        <name>ATP</name>
        <dbReference type="ChEBI" id="CHEBI:30616"/>
    </ligand>
</feature>
<feature type="binding site" evidence="1">
    <location>
        <position position="65"/>
    </location>
    <ligand>
        <name>ATP</name>
        <dbReference type="ChEBI" id="CHEBI:30616"/>
    </ligand>
</feature>
<feature type="binding site" evidence="1">
    <location>
        <position position="65"/>
    </location>
    <ligand>
        <name>Mg(2+)</name>
        <dbReference type="ChEBI" id="CHEBI:18420"/>
    </ligand>
</feature>
<feature type="binding site" evidence="1">
    <location>
        <position position="66"/>
    </location>
    <ligand>
        <name>ATP</name>
        <dbReference type="ChEBI" id="CHEBI:30616"/>
    </ligand>
</feature>
<feature type="binding site" evidence="1">
    <location>
        <begin position="127"/>
        <end position="129"/>
    </location>
    <ligand>
        <name>ATP</name>
        <dbReference type="ChEBI" id="CHEBI:30616"/>
    </ligand>
</feature>
<feature type="binding site" evidence="1">
    <location>
        <position position="170"/>
    </location>
    <ligand>
        <name>ATP</name>
        <dbReference type="ChEBI" id="CHEBI:30616"/>
    </ligand>
</feature>
<feature type="binding site" evidence="1">
    <location>
        <position position="180"/>
    </location>
    <ligand>
        <name>ATP</name>
        <dbReference type="ChEBI" id="CHEBI:30616"/>
    </ligand>
</feature>
<feature type="binding site" evidence="1">
    <location>
        <position position="217"/>
    </location>
    <ligand>
        <name>ATP</name>
        <dbReference type="ChEBI" id="CHEBI:30616"/>
    </ligand>
</feature>
<feature type="binding site" evidence="1">
    <location>
        <position position="290"/>
    </location>
    <ligand>
        <name>DNA</name>
        <dbReference type="ChEBI" id="CHEBI:16991"/>
    </ligand>
</feature>
<feature type="binding site" evidence="1">
    <location>
        <position position="309"/>
    </location>
    <ligand>
        <name>DNA</name>
        <dbReference type="ChEBI" id="CHEBI:16991"/>
    </ligand>
</feature>
<feature type="binding site" evidence="1">
    <location>
        <position position="314"/>
    </location>
    <ligand>
        <name>DNA</name>
        <dbReference type="ChEBI" id="CHEBI:16991"/>
    </ligand>
</feature>
<sequence>MTSRVVSPEQNPNDAEMSLRPQSLDDFVGQRQVCENLKVFISAARARGEALDHVLFHGPPGLGKTTLAQIMARELGVGFRATSGPVIQRAGDLAALLTNLEPRDVLFIDEIHRLNPAIEEVLYPAMEDFQLDLIIGEGPAARSVRIELPPFTLVGATTRSGLLTTPLRERFGIPCRMNFYEPAELEAIVSRGARVLGFALTPDGAAEVARRSRGTPRVAGRLLRRVRDFAVVAGRSPVDALVADAALNRLEVDRIGLDAMDRRYLRCIAENYGGGPVGVETLAAALSESRDTLEEVVEPYLLQQGMIQRTPRGRMLSASGFKHIGLNPPKDLLVQLDLLTRMDEEGE</sequence>
<proteinExistence type="inferred from homology"/>
<reference key="1">
    <citation type="journal article" date="2005" name="DNA Res.">
        <title>Complete genome sequence of the facultative anaerobic magnetotactic bacterium Magnetospirillum sp. strain AMB-1.</title>
        <authorList>
            <person name="Matsunaga T."/>
            <person name="Okamura Y."/>
            <person name="Fukuda Y."/>
            <person name="Wahyudi A.T."/>
            <person name="Murase Y."/>
            <person name="Takeyama H."/>
        </authorList>
    </citation>
    <scope>NUCLEOTIDE SEQUENCE [LARGE SCALE GENOMIC DNA]</scope>
    <source>
        <strain>ATCC 700264 / AMB-1</strain>
    </source>
</reference>
<dbReference type="EC" id="3.6.4.-" evidence="1"/>
<dbReference type="EMBL" id="AP007255">
    <property type="protein sequence ID" value="BAE52020.1"/>
    <property type="molecule type" value="Genomic_DNA"/>
</dbReference>
<dbReference type="RefSeq" id="WP_011385581.1">
    <property type="nucleotide sequence ID" value="NC_007626.1"/>
</dbReference>
<dbReference type="SMR" id="Q2W2A5"/>
<dbReference type="STRING" id="342108.amb3216"/>
<dbReference type="KEGG" id="mag:amb3216"/>
<dbReference type="HOGENOM" id="CLU_055599_1_0_5"/>
<dbReference type="OrthoDB" id="9804478at2"/>
<dbReference type="Proteomes" id="UP000007058">
    <property type="component" value="Chromosome"/>
</dbReference>
<dbReference type="GO" id="GO:0005737">
    <property type="term" value="C:cytoplasm"/>
    <property type="evidence" value="ECO:0007669"/>
    <property type="project" value="UniProtKB-SubCell"/>
</dbReference>
<dbReference type="GO" id="GO:0048476">
    <property type="term" value="C:Holliday junction resolvase complex"/>
    <property type="evidence" value="ECO:0007669"/>
    <property type="project" value="UniProtKB-UniRule"/>
</dbReference>
<dbReference type="GO" id="GO:0005524">
    <property type="term" value="F:ATP binding"/>
    <property type="evidence" value="ECO:0007669"/>
    <property type="project" value="UniProtKB-UniRule"/>
</dbReference>
<dbReference type="GO" id="GO:0016887">
    <property type="term" value="F:ATP hydrolysis activity"/>
    <property type="evidence" value="ECO:0007669"/>
    <property type="project" value="InterPro"/>
</dbReference>
<dbReference type="GO" id="GO:0000400">
    <property type="term" value="F:four-way junction DNA binding"/>
    <property type="evidence" value="ECO:0007669"/>
    <property type="project" value="UniProtKB-UniRule"/>
</dbReference>
<dbReference type="GO" id="GO:0009378">
    <property type="term" value="F:four-way junction helicase activity"/>
    <property type="evidence" value="ECO:0007669"/>
    <property type="project" value="InterPro"/>
</dbReference>
<dbReference type="GO" id="GO:0006310">
    <property type="term" value="P:DNA recombination"/>
    <property type="evidence" value="ECO:0007669"/>
    <property type="project" value="UniProtKB-UniRule"/>
</dbReference>
<dbReference type="GO" id="GO:0006281">
    <property type="term" value="P:DNA repair"/>
    <property type="evidence" value="ECO:0007669"/>
    <property type="project" value="UniProtKB-UniRule"/>
</dbReference>
<dbReference type="CDD" id="cd00009">
    <property type="entry name" value="AAA"/>
    <property type="match status" value="1"/>
</dbReference>
<dbReference type="Gene3D" id="1.10.8.60">
    <property type="match status" value="1"/>
</dbReference>
<dbReference type="Gene3D" id="3.40.50.300">
    <property type="entry name" value="P-loop containing nucleotide triphosphate hydrolases"/>
    <property type="match status" value="1"/>
</dbReference>
<dbReference type="Gene3D" id="1.10.10.10">
    <property type="entry name" value="Winged helix-like DNA-binding domain superfamily/Winged helix DNA-binding domain"/>
    <property type="match status" value="1"/>
</dbReference>
<dbReference type="HAMAP" id="MF_00016">
    <property type="entry name" value="DNA_HJ_migration_RuvB"/>
    <property type="match status" value="1"/>
</dbReference>
<dbReference type="InterPro" id="IPR003593">
    <property type="entry name" value="AAA+_ATPase"/>
</dbReference>
<dbReference type="InterPro" id="IPR041445">
    <property type="entry name" value="AAA_lid_4"/>
</dbReference>
<dbReference type="InterPro" id="IPR004605">
    <property type="entry name" value="DNA_helicase_Holl-junc_RuvB"/>
</dbReference>
<dbReference type="InterPro" id="IPR027417">
    <property type="entry name" value="P-loop_NTPase"/>
</dbReference>
<dbReference type="InterPro" id="IPR008824">
    <property type="entry name" value="RuvB-like_N"/>
</dbReference>
<dbReference type="InterPro" id="IPR008823">
    <property type="entry name" value="RuvB_C"/>
</dbReference>
<dbReference type="InterPro" id="IPR036388">
    <property type="entry name" value="WH-like_DNA-bd_sf"/>
</dbReference>
<dbReference type="InterPro" id="IPR036390">
    <property type="entry name" value="WH_DNA-bd_sf"/>
</dbReference>
<dbReference type="NCBIfam" id="NF000868">
    <property type="entry name" value="PRK00080.1"/>
    <property type="match status" value="1"/>
</dbReference>
<dbReference type="NCBIfam" id="TIGR00635">
    <property type="entry name" value="ruvB"/>
    <property type="match status" value="1"/>
</dbReference>
<dbReference type="PANTHER" id="PTHR42848">
    <property type="match status" value="1"/>
</dbReference>
<dbReference type="PANTHER" id="PTHR42848:SF1">
    <property type="entry name" value="HOLLIDAY JUNCTION BRANCH MIGRATION COMPLEX SUBUNIT RUVB"/>
    <property type="match status" value="1"/>
</dbReference>
<dbReference type="Pfam" id="PF17864">
    <property type="entry name" value="AAA_lid_4"/>
    <property type="match status" value="1"/>
</dbReference>
<dbReference type="Pfam" id="PF05491">
    <property type="entry name" value="RuvB_C"/>
    <property type="match status" value="1"/>
</dbReference>
<dbReference type="Pfam" id="PF05496">
    <property type="entry name" value="RuvB_N"/>
    <property type="match status" value="1"/>
</dbReference>
<dbReference type="SMART" id="SM00382">
    <property type="entry name" value="AAA"/>
    <property type="match status" value="1"/>
</dbReference>
<dbReference type="SUPFAM" id="SSF52540">
    <property type="entry name" value="P-loop containing nucleoside triphosphate hydrolases"/>
    <property type="match status" value="1"/>
</dbReference>
<dbReference type="SUPFAM" id="SSF46785">
    <property type="entry name" value="Winged helix' DNA-binding domain"/>
    <property type="match status" value="1"/>
</dbReference>
<accession>Q2W2A5</accession>
<name>RUVB_PARM1</name>
<organism>
    <name type="scientific">Paramagnetospirillum magneticum (strain ATCC 700264 / AMB-1)</name>
    <name type="common">Magnetospirillum magneticum</name>
    <dbReference type="NCBI Taxonomy" id="342108"/>
    <lineage>
        <taxon>Bacteria</taxon>
        <taxon>Pseudomonadati</taxon>
        <taxon>Pseudomonadota</taxon>
        <taxon>Alphaproteobacteria</taxon>
        <taxon>Rhodospirillales</taxon>
        <taxon>Magnetospirillaceae</taxon>
        <taxon>Paramagnetospirillum</taxon>
    </lineage>
</organism>
<protein>
    <recommendedName>
        <fullName evidence="1">Holliday junction branch migration complex subunit RuvB</fullName>
        <ecNumber evidence="1">3.6.4.-</ecNumber>
    </recommendedName>
</protein>